<protein>
    <recommendedName>
        <fullName evidence="1">Large ribosomal subunit protein uL23</fullName>
    </recommendedName>
    <alternativeName>
        <fullName evidence="2">50S ribosomal protein L23</fullName>
    </alternativeName>
</protein>
<sequence length="94" mass="11036">MNAHQIIIRPLITEKNTNLMRFNKYSFEVDRNATKQQIKRAIEEIFSVRVTAVHTMNVRGKLRRRGRQYGYTPDWKKAIVTLAEGDRIDLFEGA</sequence>
<comment type="function">
    <text evidence="1">One of the early assembly proteins it binds 23S rRNA. One of the proteins that surrounds the polypeptide exit tunnel on the outside of the ribosome. Forms the main docking site for trigger factor binding to the ribosome.</text>
</comment>
<comment type="subunit">
    <text evidence="1">Part of the 50S ribosomal subunit. Contacts protein L29, and trigger factor when it is bound to the ribosome.</text>
</comment>
<comment type="similarity">
    <text evidence="1">Belongs to the universal ribosomal protein uL23 family.</text>
</comment>
<evidence type="ECO:0000255" key="1">
    <source>
        <dbReference type="HAMAP-Rule" id="MF_01369"/>
    </source>
</evidence>
<evidence type="ECO:0000305" key="2"/>
<name>RL23_ROSCS</name>
<proteinExistence type="inferred from homology"/>
<gene>
    <name evidence="1" type="primary">rplW</name>
    <name type="ordered locus">Rcas_4024</name>
</gene>
<accession>A7NR61</accession>
<dbReference type="EMBL" id="CP000804">
    <property type="protein sequence ID" value="ABU60057.1"/>
    <property type="molecule type" value="Genomic_DNA"/>
</dbReference>
<dbReference type="RefSeq" id="WP_012122479.1">
    <property type="nucleotide sequence ID" value="NC_009767.1"/>
</dbReference>
<dbReference type="SMR" id="A7NR61"/>
<dbReference type="STRING" id="383372.Rcas_4024"/>
<dbReference type="KEGG" id="rca:Rcas_4024"/>
<dbReference type="eggNOG" id="COG0089">
    <property type="taxonomic scope" value="Bacteria"/>
</dbReference>
<dbReference type="HOGENOM" id="CLU_037562_3_2_0"/>
<dbReference type="Proteomes" id="UP000000263">
    <property type="component" value="Chromosome"/>
</dbReference>
<dbReference type="GO" id="GO:1990904">
    <property type="term" value="C:ribonucleoprotein complex"/>
    <property type="evidence" value="ECO:0007669"/>
    <property type="project" value="UniProtKB-KW"/>
</dbReference>
<dbReference type="GO" id="GO:0005840">
    <property type="term" value="C:ribosome"/>
    <property type="evidence" value="ECO:0007669"/>
    <property type="project" value="UniProtKB-KW"/>
</dbReference>
<dbReference type="GO" id="GO:0019843">
    <property type="term" value="F:rRNA binding"/>
    <property type="evidence" value="ECO:0007669"/>
    <property type="project" value="UniProtKB-UniRule"/>
</dbReference>
<dbReference type="GO" id="GO:0003735">
    <property type="term" value="F:structural constituent of ribosome"/>
    <property type="evidence" value="ECO:0007669"/>
    <property type="project" value="InterPro"/>
</dbReference>
<dbReference type="GO" id="GO:0006412">
    <property type="term" value="P:translation"/>
    <property type="evidence" value="ECO:0007669"/>
    <property type="project" value="UniProtKB-UniRule"/>
</dbReference>
<dbReference type="FunFam" id="3.30.70.330:FF:000001">
    <property type="entry name" value="50S ribosomal protein L23"/>
    <property type="match status" value="1"/>
</dbReference>
<dbReference type="Gene3D" id="3.30.70.330">
    <property type="match status" value="1"/>
</dbReference>
<dbReference type="HAMAP" id="MF_01369_B">
    <property type="entry name" value="Ribosomal_uL23_B"/>
    <property type="match status" value="1"/>
</dbReference>
<dbReference type="InterPro" id="IPR012677">
    <property type="entry name" value="Nucleotide-bd_a/b_plait_sf"/>
</dbReference>
<dbReference type="InterPro" id="IPR013025">
    <property type="entry name" value="Ribosomal_uL23-like"/>
</dbReference>
<dbReference type="InterPro" id="IPR012678">
    <property type="entry name" value="Ribosomal_uL23/eL15/eS24_sf"/>
</dbReference>
<dbReference type="InterPro" id="IPR001014">
    <property type="entry name" value="Ribosomal_uL23_CS"/>
</dbReference>
<dbReference type="NCBIfam" id="NF004359">
    <property type="entry name" value="PRK05738.1-3"/>
    <property type="match status" value="1"/>
</dbReference>
<dbReference type="NCBIfam" id="NF004363">
    <property type="entry name" value="PRK05738.2-4"/>
    <property type="match status" value="1"/>
</dbReference>
<dbReference type="NCBIfam" id="NF004366">
    <property type="entry name" value="PRK05738.3-2"/>
    <property type="match status" value="1"/>
</dbReference>
<dbReference type="PANTHER" id="PTHR11620">
    <property type="entry name" value="60S RIBOSOMAL PROTEIN L23A"/>
    <property type="match status" value="1"/>
</dbReference>
<dbReference type="Pfam" id="PF00276">
    <property type="entry name" value="Ribosomal_L23"/>
    <property type="match status" value="1"/>
</dbReference>
<dbReference type="SUPFAM" id="SSF54189">
    <property type="entry name" value="Ribosomal proteins S24e, L23 and L15e"/>
    <property type="match status" value="1"/>
</dbReference>
<dbReference type="PROSITE" id="PS00050">
    <property type="entry name" value="RIBOSOMAL_L23"/>
    <property type="match status" value="1"/>
</dbReference>
<organism>
    <name type="scientific">Roseiflexus castenholzii (strain DSM 13941 / HLO8)</name>
    <dbReference type="NCBI Taxonomy" id="383372"/>
    <lineage>
        <taxon>Bacteria</taxon>
        <taxon>Bacillati</taxon>
        <taxon>Chloroflexota</taxon>
        <taxon>Chloroflexia</taxon>
        <taxon>Chloroflexales</taxon>
        <taxon>Roseiflexineae</taxon>
        <taxon>Roseiflexaceae</taxon>
        <taxon>Roseiflexus</taxon>
    </lineage>
</organism>
<feature type="chain" id="PRO_1000087228" description="Large ribosomal subunit protein uL23">
    <location>
        <begin position="1"/>
        <end position="94"/>
    </location>
</feature>
<reference key="1">
    <citation type="submission" date="2007-08" db="EMBL/GenBank/DDBJ databases">
        <title>Complete sequence of Roseiflexus castenholzii DSM 13941.</title>
        <authorList>
            <consortium name="US DOE Joint Genome Institute"/>
            <person name="Copeland A."/>
            <person name="Lucas S."/>
            <person name="Lapidus A."/>
            <person name="Barry K."/>
            <person name="Glavina del Rio T."/>
            <person name="Dalin E."/>
            <person name="Tice H."/>
            <person name="Pitluck S."/>
            <person name="Thompson L.S."/>
            <person name="Brettin T."/>
            <person name="Bruce D."/>
            <person name="Detter J.C."/>
            <person name="Han C."/>
            <person name="Tapia R."/>
            <person name="Schmutz J."/>
            <person name="Larimer F."/>
            <person name="Land M."/>
            <person name="Hauser L."/>
            <person name="Kyrpides N."/>
            <person name="Mikhailova N."/>
            <person name="Bryant D.A."/>
            <person name="Hanada S."/>
            <person name="Tsukatani Y."/>
            <person name="Richardson P."/>
        </authorList>
    </citation>
    <scope>NUCLEOTIDE SEQUENCE [LARGE SCALE GENOMIC DNA]</scope>
    <source>
        <strain>DSM 13941 / HLO8</strain>
    </source>
</reference>
<keyword id="KW-1185">Reference proteome</keyword>
<keyword id="KW-0687">Ribonucleoprotein</keyword>
<keyword id="KW-0689">Ribosomal protein</keyword>
<keyword id="KW-0694">RNA-binding</keyword>
<keyword id="KW-0699">rRNA-binding</keyword>